<comment type="similarity">
    <text evidence="2">Belongs to the UPF0213 family.</text>
</comment>
<evidence type="ECO:0000255" key="1">
    <source>
        <dbReference type="PROSITE-ProRule" id="PRU00977"/>
    </source>
</evidence>
<evidence type="ECO:0000305" key="2"/>
<protein>
    <recommendedName>
        <fullName>UPF0213 protein HQ_3675A</fullName>
    </recommendedName>
</protein>
<sequence length="89" mass="10419">MNDYHYVYIVECSDESLYTGYTTDVERRVREHNAGEGAKYTRGRTPVQLVHFECFDTRSAALSREHEIKSYTREKKQQLAEEGTDINQP</sequence>
<organism>
    <name type="scientific">Haloquadratum walsbyi (strain DSM 16790 / HBSQ001)</name>
    <dbReference type="NCBI Taxonomy" id="362976"/>
    <lineage>
        <taxon>Archaea</taxon>
        <taxon>Methanobacteriati</taxon>
        <taxon>Methanobacteriota</taxon>
        <taxon>Stenosarchaea group</taxon>
        <taxon>Halobacteria</taxon>
        <taxon>Halobacteriales</taxon>
        <taxon>Haloferacaceae</taxon>
        <taxon>Haloquadratum</taxon>
    </lineage>
</organism>
<keyword id="KW-1185">Reference proteome</keyword>
<feature type="chain" id="PRO_1000063667" description="UPF0213 protein HQ_3675A">
    <location>
        <begin position="1"/>
        <end position="89"/>
    </location>
</feature>
<feature type="domain" description="GIY-YIG" evidence="1">
    <location>
        <begin position="3"/>
        <end position="78"/>
    </location>
</feature>
<name>Y3675_HALWD</name>
<proteinExistence type="inferred from homology"/>
<dbReference type="EMBL" id="AM180088">
    <property type="protein sequence ID" value="CAJ53762.1"/>
    <property type="molecule type" value="Genomic_DNA"/>
</dbReference>
<dbReference type="RefSeq" id="WP_011572844.1">
    <property type="nucleotide sequence ID" value="NC_008212.1"/>
</dbReference>
<dbReference type="SMR" id="Q18E71"/>
<dbReference type="STRING" id="362976.HQ_3675A"/>
<dbReference type="GeneID" id="4193633"/>
<dbReference type="KEGG" id="hwa:HQ_3675A"/>
<dbReference type="eggNOG" id="arCOG04722">
    <property type="taxonomic scope" value="Archaea"/>
</dbReference>
<dbReference type="HOGENOM" id="CLU_135650_0_3_2"/>
<dbReference type="Proteomes" id="UP000001975">
    <property type="component" value="Chromosome"/>
</dbReference>
<dbReference type="CDD" id="cd10456">
    <property type="entry name" value="GIY-YIG_UPF0213"/>
    <property type="match status" value="1"/>
</dbReference>
<dbReference type="Gene3D" id="3.40.1440.10">
    <property type="entry name" value="GIY-YIG endonuclease"/>
    <property type="match status" value="1"/>
</dbReference>
<dbReference type="InterPro" id="IPR000305">
    <property type="entry name" value="GIY-YIG_endonuc"/>
</dbReference>
<dbReference type="InterPro" id="IPR035901">
    <property type="entry name" value="GIY-YIG_endonuc_sf"/>
</dbReference>
<dbReference type="InterPro" id="IPR050190">
    <property type="entry name" value="UPF0213_domain"/>
</dbReference>
<dbReference type="PANTHER" id="PTHR34477">
    <property type="entry name" value="UPF0213 PROTEIN YHBQ"/>
    <property type="match status" value="1"/>
</dbReference>
<dbReference type="PANTHER" id="PTHR34477:SF1">
    <property type="entry name" value="UPF0213 PROTEIN YHBQ"/>
    <property type="match status" value="1"/>
</dbReference>
<dbReference type="Pfam" id="PF01541">
    <property type="entry name" value="GIY-YIG"/>
    <property type="match status" value="1"/>
</dbReference>
<dbReference type="SUPFAM" id="SSF82771">
    <property type="entry name" value="GIY-YIG endonuclease"/>
    <property type="match status" value="1"/>
</dbReference>
<dbReference type="PROSITE" id="PS50164">
    <property type="entry name" value="GIY_YIG"/>
    <property type="match status" value="1"/>
</dbReference>
<reference key="1">
    <citation type="journal article" date="2006" name="BMC Genomics">
        <title>The genome of the square archaeon Haloquadratum walsbyi: life at the limits of water activity.</title>
        <authorList>
            <person name="Bolhuis H."/>
            <person name="Palm P."/>
            <person name="Wende A."/>
            <person name="Falb M."/>
            <person name="Rampp M."/>
            <person name="Rodriguez-Valera F."/>
            <person name="Pfeiffer F."/>
            <person name="Oesterhelt D."/>
        </authorList>
    </citation>
    <scope>NUCLEOTIDE SEQUENCE [LARGE SCALE GENOMIC DNA]</scope>
    <source>
        <strain>DSM 16790 / HBSQ001</strain>
    </source>
</reference>
<accession>Q18E71</accession>
<gene>
    <name type="ordered locus">HQ_3675A</name>
</gene>